<evidence type="ECO:0000250" key="1">
    <source>
        <dbReference type="UniProtKB" id="Q9CZ83"/>
    </source>
</evidence>
<evidence type="ECO:0000255" key="2"/>
<evidence type="ECO:0000269" key="3">
    <source>
    </source>
</evidence>
<evidence type="ECO:0000305" key="4"/>
<comment type="subunit">
    <text evidence="3">Component of the mitochondrial ribosome large subunit (39S) which comprises a 16S rRNA and about 50 distinct proteins.</text>
</comment>
<comment type="subcellular location">
    <subcellularLocation>
        <location evidence="3">Mitochondrion</location>
    </subcellularLocation>
</comment>
<comment type="similarity">
    <text evidence="4">Belongs to the mitochondrion-specific ribosomal protein mL55 family.</text>
</comment>
<sequence>MSAKGSLLRLLWQCGMTRAAPESCRYLYTSSWRADCNRASLTRVHRQTYARLYPILLVKQDGSTIHIRYPEPRRILTMPVDLDSLSPEERRARFRKREGQLKEKKEEPELADDFDVEQYKQFWTKK</sequence>
<gene>
    <name type="primary">MRPL55</name>
</gene>
<proteinExistence type="evidence at protein level"/>
<keyword id="KW-0496">Mitochondrion</keyword>
<keyword id="KW-0597">Phosphoprotein</keyword>
<keyword id="KW-1185">Reference proteome</keyword>
<keyword id="KW-0687">Ribonucleoprotein</keyword>
<keyword id="KW-0689">Ribosomal protein</keyword>
<keyword id="KW-0809">Transit peptide</keyword>
<organism>
    <name type="scientific">Bos taurus</name>
    <name type="common">Bovine</name>
    <dbReference type="NCBI Taxonomy" id="9913"/>
    <lineage>
        <taxon>Eukaryota</taxon>
        <taxon>Metazoa</taxon>
        <taxon>Chordata</taxon>
        <taxon>Craniata</taxon>
        <taxon>Vertebrata</taxon>
        <taxon>Euteleostomi</taxon>
        <taxon>Mammalia</taxon>
        <taxon>Eutheria</taxon>
        <taxon>Laurasiatheria</taxon>
        <taxon>Artiodactyla</taxon>
        <taxon>Ruminantia</taxon>
        <taxon>Pecora</taxon>
        <taxon>Bovidae</taxon>
        <taxon>Bovinae</taxon>
        <taxon>Bos</taxon>
    </lineage>
</organism>
<feature type="transit peptide" description="Mitochondrion" evidence="2">
    <location>
        <begin position="1"/>
        <end position="34"/>
    </location>
</feature>
<feature type="chain" id="PRO_0000273098" description="Large ribosomal subunit protein mL55">
    <location>
        <begin position="35"/>
        <end position="126"/>
    </location>
</feature>
<feature type="modified residue" description="Phosphoserine" evidence="1">
    <location>
        <position position="86"/>
    </location>
</feature>
<name>RM55_BOVIN</name>
<accession>P0C2B8</accession>
<reference key="1">
    <citation type="submission" date="2000-10" db="EMBL/GenBank/DDBJ databases">
        <title>Bovine ESTs.</title>
        <authorList>
            <person name="Lewin H.A."/>
            <person name="Soares M.B."/>
            <person name="Rebeiz M."/>
            <person name="Pardinas J."/>
            <person name="Liu L."/>
            <person name="Larson J.H."/>
        </authorList>
    </citation>
    <scope>NUCLEOTIDE SEQUENCE [LARGE SCALE MRNA]</scope>
</reference>
<reference key="2">
    <citation type="journal article" date="2001" name="J. Biol. Chem.">
        <title>The large subunit of the mammalian mitochondrial ribosome. Analysis of the complement of ribosomal proteins present.</title>
        <authorList>
            <person name="Koc E.C."/>
            <person name="Burkhart W."/>
            <person name="Blackburn K."/>
            <person name="Moyer M.B."/>
            <person name="Schlatzer D.M."/>
            <person name="Moseley A."/>
            <person name="Spremulli L.L."/>
        </authorList>
    </citation>
    <scope>IDENTIFICATION BY MASS SPECTROMETRY</scope>
    <scope>IDENTIFICATION IN THE 39S MITOCHONDRIAL RIBOSOME</scope>
    <scope>SUBCELLULAR LOCATION</scope>
</reference>
<dbReference type="EMBL" id="BF044634">
    <property type="status" value="NOT_ANNOTATED_CDS"/>
    <property type="molecule type" value="mRNA"/>
</dbReference>
<dbReference type="SMR" id="P0C2B8"/>
<dbReference type="FunCoup" id="P0C2B8">
    <property type="interactions" value="1101"/>
</dbReference>
<dbReference type="STRING" id="9913.ENSBTAP00000027614"/>
<dbReference type="PaxDb" id="9913-ENSBTAP00000027614"/>
<dbReference type="eggNOG" id="KOG4616">
    <property type="taxonomic scope" value="Eukaryota"/>
</dbReference>
<dbReference type="HOGENOM" id="CLU_139855_0_0_1"/>
<dbReference type="InParanoid" id="P0C2B8"/>
<dbReference type="TreeFam" id="TF320422"/>
<dbReference type="Proteomes" id="UP000009136">
    <property type="component" value="Unplaced"/>
</dbReference>
<dbReference type="GO" id="GO:0005743">
    <property type="term" value="C:mitochondrial inner membrane"/>
    <property type="evidence" value="ECO:0000304"/>
    <property type="project" value="Reactome"/>
</dbReference>
<dbReference type="GO" id="GO:0005762">
    <property type="term" value="C:mitochondrial large ribosomal subunit"/>
    <property type="evidence" value="ECO:0000314"/>
    <property type="project" value="UniProtKB"/>
</dbReference>
<dbReference type="GO" id="GO:0003735">
    <property type="term" value="F:structural constituent of ribosome"/>
    <property type="evidence" value="ECO:0000314"/>
    <property type="project" value="UniProtKB"/>
</dbReference>
<dbReference type="GO" id="GO:0006412">
    <property type="term" value="P:translation"/>
    <property type="evidence" value="ECO:0000314"/>
    <property type="project" value="UniProtKB"/>
</dbReference>
<dbReference type="Gene3D" id="6.20.130.20">
    <property type="entry name" value="Mitochondrial ribosomal protein L55"/>
    <property type="match status" value="1"/>
</dbReference>
<dbReference type="InterPro" id="IPR018615">
    <property type="entry name" value="Ribosomal_mL55"/>
</dbReference>
<dbReference type="InterPro" id="IPR044884">
    <property type="entry name" value="Ribosomal_mL55_sf"/>
</dbReference>
<dbReference type="PANTHER" id="PTHR34095">
    <property type="entry name" value="39S RIBOSOMAL PROTEIN L55, MITOCHONDRIAL"/>
    <property type="match status" value="1"/>
</dbReference>
<dbReference type="PANTHER" id="PTHR34095:SF1">
    <property type="entry name" value="LARGE RIBOSOMAL SUBUNIT PROTEIN ML55"/>
    <property type="match status" value="1"/>
</dbReference>
<dbReference type="Pfam" id="PF09776">
    <property type="entry name" value="Mitoc_L55"/>
    <property type="match status" value="1"/>
</dbReference>
<protein>
    <recommendedName>
        <fullName evidence="4">Large ribosomal subunit protein mL55</fullName>
    </recommendedName>
    <alternativeName>
        <fullName>39S ribosomal protein L55, mitochondrial</fullName>
        <shortName>L55mt</shortName>
        <shortName>MRP-L55</shortName>
    </alternativeName>
</protein>